<evidence type="ECO:0000255" key="1">
    <source>
        <dbReference type="HAMAP-Rule" id="MF_00031"/>
    </source>
</evidence>
<gene>
    <name evidence="1" type="primary">ruvA</name>
    <name type="ordered locus">CHU_0028</name>
</gene>
<comment type="function">
    <text evidence="1">The RuvA-RuvB-RuvC complex processes Holliday junction (HJ) DNA during genetic recombination and DNA repair, while the RuvA-RuvB complex plays an important role in the rescue of blocked DNA replication forks via replication fork reversal (RFR). RuvA specifically binds to HJ cruciform DNA, conferring on it an open structure. The RuvB hexamer acts as an ATP-dependent pump, pulling dsDNA into and through the RuvAB complex. HJ branch migration allows RuvC to scan DNA until it finds its consensus sequence, where it cleaves and resolves the cruciform DNA.</text>
</comment>
<comment type="subunit">
    <text evidence="1">Homotetramer. Forms an RuvA(8)-RuvB(12)-Holliday junction (HJ) complex. HJ DNA is sandwiched between 2 RuvA tetramers; dsDNA enters through RuvA and exits via RuvB. An RuvB hexamer assembles on each DNA strand where it exits the tetramer. Each RuvB hexamer is contacted by two RuvA subunits (via domain III) on 2 adjacent RuvB subunits; this complex drives branch migration. In the full resolvosome a probable DNA-RuvA(4)-RuvB(12)-RuvC(2) complex forms which resolves the HJ.</text>
</comment>
<comment type="subcellular location">
    <subcellularLocation>
        <location evidence="1">Cytoplasm</location>
    </subcellularLocation>
</comment>
<comment type="domain">
    <text evidence="1">Has three domains with a flexible linker between the domains II and III and assumes an 'L' shape. Domain III is highly mobile and contacts RuvB.</text>
</comment>
<comment type="similarity">
    <text evidence="1">Belongs to the RuvA family.</text>
</comment>
<keyword id="KW-0963">Cytoplasm</keyword>
<keyword id="KW-0227">DNA damage</keyword>
<keyword id="KW-0233">DNA recombination</keyword>
<keyword id="KW-0234">DNA repair</keyword>
<keyword id="KW-0238">DNA-binding</keyword>
<keyword id="KW-1185">Reference proteome</keyword>
<accession>Q11Z44</accession>
<name>RUVA_CYTH3</name>
<dbReference type="EMBL" id="CP000383">
    <property type="protein sequence ID" value="ABG57322.1"/>
    <property type="molecule type" value="Genomic_DNA"/>
</dbReference>
<dbReference type="RefSeq" id="WP_011583438.1">
    <property type="nucleotide sequence ID" value="NC_008255.1"/>
</dbReference>
<dbReference type="SMR" id="Q11Z44"/>
<dbReference type="STRING" id="269798.CHU_0028"/>
<dbReference type="KEGG" id="chu:CHU_0028"/>
<dbReference type="eggNOG" id="COG0632">
    <property type="taxonomic scope" value="Bacteria"/>
</dbReference>
<dbReference type="HOGENOM" id="CLU_087936_3_0_10"/>
<dbReference type="OrthoDB" id="5293449at2"/>
<dbReference type="Proteomes" id="UP000001822">
    <property type="component" value="Chromosome"/>
</dbReference>
<dbReference type="GO" id="GO:0005737">
    <property type="term" value="C:cytoplasm"/>
    <property type="evidence" value="ECO:0007669"/>
    <property type="project" value="UniProtKB-SubCell"/>
</dbReference>
<dbReference type="GO" id="GO:0009379">
    <property type="term" value="C:Holliday junction helicase complex"/>
    <property type="evidence" value="ECO:0007669"/>
    <property type="project" value="InterPro"/>
</dbReference>
<dbReference type="GO" id="GO:0048476">
    <property type="term" value="C:Holliday junction resolvase complex"/>
    <property type="evidence" value="ECO:0007669"/>
    <property type="project" value="UniProtKB-UniRule"/>
</dbReference>
<dbReference type="GO" id="GO:0005524">
    <property type="term" value="F:ATP binding"/>
    <property type="evidence" value="ECO:0007669"/>
    <property type="project" value="InterPro"/>
</dbReference>
<dbReference type="GO" id="GO:0000400">
    <property type="term" value="F:four-way junction DNA binding"/>
    <property type="evidence" value="ECO:0007669"/>
    <property type="project" value="UniProtKB-UniRule"/>
</dbReference>
<dbReference type="GO" id="GO:0009378">
    <property type="term" value="F:four-way junction helicase activity"/>
    <property type="evidence" value="ECO:0007669"/>
    <property type="project" value="InterPro"/>
</dbReference>
<dbReference type="GO" id="GO:0006310">
    <property type="term" value="P:DNA recombination"/>
    <property type="evidence" value="ECO:0007669"/>
    <property type="project" value="UniProtKB-UniRule"/>
</dbReference>
<dbReference type="GO" id="GO:0006281">
    <property type="term" value="P:DNA repair"/>
    <property type="evidence" value="ECO:0007669"/>
    <property type="project" value="UniProtKB-UniRule"/>
</dbReference>
<dbReference type="CDD" id="cd14332">
    <property type="entry name" value="UBA_RuvA_C"/>
    <property type="match status" value="1"/>
</dbReference>
<dbReference type="Gene3D" id="1.10.150.20">
    <property type="entry name" value="5' to 3' exonuclease, C-terminal subdomain"/>
    <property type="match status" value="1"/>
</dbReference>
<dbReference type="Gene3D" id="1.10.8.10">
    <property type="entry name" value="DNA helicase RuvA subunit, C-terminal domain"/>
    <property type="match status" value="1"/>
</dbReference>
<dbReference type="Gene3D" id="2.40.50.140">
    <property type="entry name" value="Nucleic acid-binding proteins"/>
    <property type="match status" value="1"/>
</dbReference>
<dbReference type="HAMAP" id="MF_00031">
    <property type="entry name" value="DNA_HJ_migration_RuvA"/>
    <property type="match status" value="1"/>
</dbReference>
<dbReference type="InterPro" id="IPR013849">
    <property type="entry name" value="DNA_helicase_Holl-junc_RuvA_I"/>
</dbReference>
<dbReference type="InterPro" id="IPR003583">
    <property type="entry name" value="Hlx-hairpin-Hlx_DNA-bd_motif"/>
</dbReference>
<dbReference type="InterPro" id="IPR012340">
    <property type="entry name" value="NA-bd_OB-fold"/>
</dbReference>
<dbReference type="InterPro" id="IPR000085">
    <property type="entry name" value="RuvA"/>
</dbReference>
<dbReference type="InterPro" id="IPR010994">
    <property type="entry name" value="RuvA_2-like"/>
</dbReference>
<dbReference type="InterPro" id="IPR011114">
    <property type="entry name" value="RuvA_C"/>
</dbReference>
<dbReference type="InterPro" id="IPR036267">
    <property type="entry name" value="RuvA_C_sf"/>
</dbReference>
<dbReference type="NCBIfam" id="TIGR00084">
    <property type="entry name" value="ruvA"/>
    <property type="match status" value="1"/>
</dbReference>
<dbReference type="Pfam" id="PF14520">
    <property type="entry name" value="HHH_5"/>
    <property type="match status" value="1"/>
</dbReference>
<dbReference type="Pfam" id="PF07499">
    <property type="entry name" value="RuvA_C"/>
    <property type="match status" value="1"/>
</dbReference>
<dbReference type="Pfam" id="PF01330">
    <property type="entry name" value="RuvA_N"/>
    <property type="match status" value="1"/>
</dbReference>
<dbReference type="SMART" id="SM00278">
    <property type="entry name" value="HhH1"/>
    <property type="match status" value="2"/>
</dbReference>
<dbReference type="SUPFAM" id="SSF46929">
    <property type="entry name" value="DNA helicase RuvA subunit, C-terminal domain"/>
    <property type="match status" value="1"/>
</dbReference>
<dbReference type="SUPFAM" id="SSF50249">
    <property type="entry name" value="Nucleic acid-binding proteins"/>
    <property type="match status" value="1"/>
</dbReference>
<dbReference type="SUPFAM" id="SSF47781">
    <property type="entry name" value="RuvA domain 2-like"/>
    <property type="match status" value="1"/>
</dbReference>
<protein>
    <recommendedName>
        <fullName evidence="1">Holliday junction branch migration complex subunit RuvA</fullName>
    </recommendedName>
</protein>
<reference key="1">
    <citation type="journal article" date="2007" name="Appl. Environ. Microbiol.">
        <title>Genome sequence of the cellulolytic gliding bacterium Cytophaga hutchinsonii.</title>
        <authorList>
            <person name="Xie G."/>
            <person name="Bruce D.C."/>
            <person name="Challacombe J.F."/>
            <person name="Chertkov O."/>
            <person name="Detter J.C."/>
            <person name="Gilna P."/>
            <person name="Han C.S."/>
            <person name="Lucas S."/>
            <person name="Misra M."/>
            <person name="Myers G.L."/>
            <person name="Richardson P."/>
            <person name="Tapia R."/>
            <person name="Thayer N."/>
            <person name="Thompson L.S."/>
            <person name="Brettin T.S."/>
            <person name="Henrissat B."/>
            <person name="Wilson D.B."/>
            <person name="McBride M.J."/>
        </authorList>
    </citation>
    <scope>NUCLEOTIDE SEQUENCE [LARGE SCALE GENOMIC DNA]</scope>
    <source>
        <strain>ATCC 33406 / DSM 1761 / JCM 20678 / CIP 103989 / IAM 12607 / NBRC 15051 / NCIMB 9469 / D465</strain>
    </source>
</reference>
<feature type="chain" id="PRO_1000002437" description="Holliday junction branch migration complex subunit RuvA">
    <location>
        <begin position="1"/>
        <end position="199"/>
    </location>
</feature>
<feature type="region of interest" description="Domain I" evidence="1">
    <location>
        <begin position="1"/>
        <end position="63"/>
    </location>
</feature>
<feature type="region of interest" description="Domain II" evidence="1">
    <location>
        <begin position="64"/>
        <end position="142"/>
    </location>
</feature>
<feature type="region of interest" description="Flexible linker" evidence="1">
    <location>
        <begin position="143"/>
        <end position="151"/>
    </location>
</feature>
<feature type="region of interest" description="Domain III" evidence="1">
    <location>
        <begin position="151"/>
        <end position="199"/>
    </location>
</feature>
<proteinExistence type="inferred from homology"/>
<organism>
    <name type="scientific">Cytophaga hutchinsonii (strain ATCC 33406 / DSM 1761 / CIP 103989 / NBRC 15051 / NCIMB 9469 / D465)</name>
    <dbReference type="NCBI Taxonomy" id="269798"/>
    <lineage>
        <taxon>Bacteria</taxon>
        <taxon>Pseudomonadati</taxon>
        <taxon>Bacteroidota</taxon>
        <taxon>Cytophagia</taxon>
        <taxon>Cytophagales</taxon>
        <taxon>Cytophagaceae</taxon>
        <taxon>Cytophaga</taxon>
    </lineage>
</organism>
<sequence>MIAYIEGKLAHKDPTFVVVDVQGIGYHIRVSLHTFSQLKDLERVKIHTFLHIKEDAHTLFGFADLMEKEMFLHLTSISGIGPGTALVVLSSMNPIELKEAIAREDVKTIQSVKGIGLKTAQRVILELKDKMKKDALLAGSDSKQNFSVSHNSIRSEALTALITLGFTKTVAEKNLDLILKGNSNSFTLEDLIKQALKMS</sequence>